<sequence>MTAQPQVLTIRRPDDWHVHLRDGDMLKTVVPYTSETYGRAIVMPNLAPPVTTVEAAIAYRQRILDAVPEHHAFEPLMTCYLTDTLDADELERGFQQGVFTAAKLYPANATTNSSHGVTSVDNIMTVLERMEKLGMPLLVHGEVTHSEVDIFDREARFIETVMEPLRKRLQGLKVVFEHITTKDAADYVREGNSLLGATITPQHLMFNRNHMLAGGIRPHLYCLPILKRNVHQQALRELVASGCERVFLGTDSAPHARHRKETSCGCAGCFNAPSALGAYATVFEEMNALAHFEAFASLNGPGFYGLPVNEGTVTLVREESVMPETIAIADDTLVPFLAGEAVRWTVKR</sequence>
<keyword id="KW-0378">Hydrolase</keyword>
<keyword id="KW-0479">Metal-binding</keyword>
<keyword id="KW-0665">Pyrimidine biosynthesis</keyword>
<keyword id="KW-1185">Reference proteome</keyword>
<keyword id="KW-0862">Zinc</keyword>
<reference key="1">
    <citation type="journal article" date="2010" name="PLoS ONE">
        <title>Genome sequence of Cronobacter sakazakii BAA-894 and comparative genomic hybridization analysis with other Cronobacter species.</title>
        <authorList>
            <person name="Kucerova E."/>
            <person name="Clifton S.W."/>
            <person name="Xia X.Q."/>
            <person name="Long F."/>
            <person name="Porwollik S."/>
            <person name="Fulton L."/>
            <person name="Fronick C."/>
            <person name="Minx P."/>
            <person name="Kyung K."/>
            <person name="Warren W."/>
            <person name="Fulton R."/>
            <person name="Feng D."/>
            <person name="Wollam A."/>
            <person name="Shah N."/>
            <person name="Bhonagiri V."/>
            <person name="Nash W.E."/>
            <person name="Hallsworth-Pepin K."/>
            <person name="Wilson R.K."/>
            <person name="McClelland M."/>
            <person name="Forsythe S.J."/>
        </authorList>
    </citation>
    <scope>NUCLEOTIDE SEQUENCE [LARGE SCALE GENOMIC DNA]</scope>
    <source>
        <strain>ATCC BAA-894</strain>
    </source>
</reference>
<comment type="function">
    <text evidence="1">Catalyzes the reversible cyclization of carbamoyl aspartate to dihydroorotate.</text>
</comment>
<comment type="catalytic activity">
    <reaction evidence="1">
        <text>(S)-dihydroorotate + H2O = N-carbamoyl-L-aspartate + H(+)</text>
        <dbReference type="Rhea" id="RHEA:24296"/>
        <dbReference type="ChEBI" id="CHEBI:15377"/>
        <dbReference type="ChEBI" id="CHEBI:15378"/>
        <dbReference type="ChEBI" id="CHEBI:30864"/>
        <dbReference type="ChEBI" id="CHEBI:32814"/>
        <dbReference type="EC" id="3.5.2.3"/>
    </reaction>
</comment>
<comment type="cofactor">
    <cofactor evidence="1">
        <name>Zn(2+)</name>
        <dbReference type="ChEBI" id="CHEBI:29105"/>
    </cofactor>
    <text evidence="1">Binds 2 Zn(2+) ions per subunit.</text>
</comment>
<comment type="pathway">
    <text evidence="1">Pyrimidine metabolism; UMP biosynthesis via de novo pathway; (S)-dihydroorotate from bicarbonate: step 3/3.</text>
</comment>
<comment type="subunit">
    <text evidence="1">Homodimer.</text>
</comment>
<comment type="similarity">
    <text evidence="1">Belongs to the metallo-dependent hydrolases superfamily. DHOase family. Class II DHOase subfamily.</text>
</comment>
<organism>
    <name type="scientific">Cronobacter sakazakii (strain ATCC BAA-894)</name>
    <name type="common">Enterobacter sakazakii</name>
    <dbReference type="NCBI Taxonomy" id="290339"/>
    <lineage>
        <taxon>Bacteria</taxon>
        <taxon>Pseudomonadati</taxon>
        <taxon>Pseudomonadota</taxon>
        <taxon>Gammaproteobacteria</taxon>
        <taxon>Enterobacterales</taxon>
        <taxon>Enterobacteriaceae</taxon>
        <taxon>Cronobacter</taxon>
    </lineage>
</organism>
<protein>
    <recommendedName>
        <fullName evidence="1">Dihydroorotase</fullName>
        <shortName evidence="1">DHOase</shortName>
        <ecNumber evidence="1">3.5.2.3</ecNumber>
    </recommendedName>
</protein>
<evidence type="ECO:0000255" key="1">
    <source>
        <dbReference type="HAMAP-Rule" id="MF_00219"/>
    </source>
</evidence>
<name>PYRC_CROS8</name>
<feature type="chain" id="PRO_1000024012" description="Dihydroorotase">
    <location>
        <begin position="1"/>
        <end position="348"/>
    </location>
</feature>
<feature type="active site" evidence="1">
    <location>
        <position position="251"/>
    </location>
</feature>
<feature type="binding site" evidence="1">
    <location>
        <position position="17"/>
    </location>
    <ligand>
        <name>Zn(2+)</name>
        <dbReference type="ChEBI" id="CHEBI:29105"/>
        <label>1</label>
    </ligand>
</feature>
<feature type="binding site" evidence="1">
    <location>
        <begin position="19"/>
        <end position="21"/>
    </location>
    <ligand>
        <name>substrate</name>
    </ligand>
</feature>
<feature type="binding site" evidence="1">
    <location>
        <position position="19"/>
    </location>
    <ligand>
        <name>Zn(2+)</name>
        <dbReference type="ChEBI" id="CHEBI:29105"/>
        <label>1</label>
    </ligand>
</feature>
<feature type="binding site" evidence="1">
    <location>
        <position position="45"/>
    </location>
    <ligand>
        <name>substrate</name>
    </ligand>
</feature>
<feature type="binding site" description="via carbamate group" evidence="1">
    <location>
        <position position="103"/>
    </location>
    <ligand>
        <name>Zn(2+)</name>
        <dbReference type="ChEBI" id="CHEBI:29105"/>
        <label>1</label>
    </ligand>
</feature>
<feature type="binding site" description="via carbamate group" evidence="1">
    <location>
        <position position="103"/>
    </location>
    <ligand>
        <name>Zn(2+)</name>
        <dbReference type="ChEBI" id="CHEBI:29105"/>
        <label>2</label>
    </ligand>
</feature>
<feature type="binding site" evidence="1">
    <location>
        <position position="140"/>
    </location>
    <ligand>
        <name>substrate</name>
    </ligand>
</feature>
<feature type="binding site" evidence="1">
    <location>
        <position position="140"/>
    </location>
    <ligand>
        <name>Zn(2+)</name>
        <dbReference type="ChEBI" id="CHEBI:29105"/>
        <label>2</label>
    </ligand>
</feature>
<feature type="binding site" evidence="1">
    <location>
        <position position="178"/>
    </location>
    <ligand>
        <name>Zn(2+)</name>
        <dbReference type="ChEBI" id="CHEBI:29105"/>
        <label>2</label>
    </ligand>
</feature>
<feature type="binding site" evidence="1">
    <location>
        <position position="223"/>
    </location>
    <ligand>
        <name>substrate</name>
    </ligand>
</feature>
<feature type="binding site" evidence="1">
    <location>
        <position position="251"/>
    </location>
    <ligand>
        <name>Zn(2+)</name>
        <dbReference type="ChEBI" id="CHEBI:29105"/>
        <label>1</label>
    </ligand>
</feature>
<feature type="binding site" evidence="1">
    <location>
        <position position="255"/>
    </location>
    <ligand>
        <name>substrate</name>
    </ligand>
</feature>
<feature type="binding site" evidence="1">
    <location>
        <position position="267"/>
    </location>
    <ligand>
        <name>substrate</name>
    </ligand>
</feature>
<feature type="modified residue" description="N6-carboxylysine" evidence="1">
    <location>
        <position position="103"/>
    </location>
</feature>
<proteinExistence type="inferred from homology"/>
<dbReference type="EC" id="3.5.2.3" evidence="1"/>
<dbReference type="EMBL" id="CP000783">
    <property type="protein sequence ID" value="ABU77535.1"/>
    <property type="molecule type" value="Genomic_DNA"/>
</dbReference>
<dbReference type="RefSeq" id="WP_012125098.1">
    <property type="nucleotide sequence ID" value="NC_009778.1"/>
</dbReference>
<dbReference type="SMR" id="A7MG30"/>
<dbReference type="KEGG" id="esa:ESA_02286"/>
<dbReference type="PATRIC" id="fig|290339.8.peg.2046"/>
<dbReference type="HOGENOM" id="CLU_041558_1_0_6"/>
<dbReference type="UniPathway" id="UPA00070">
    <property type="reaction ID" value="UER00117"/>
</dbReference>
<dbReference type="Proteomes" id="UP000000260">
    <property type="component" value="Chromosome"/>
</dbReference>
<dbReference type="GO" id="GO:0005829">
    <property type="term" value="C:cytosol"/>
    <property type="evidence" value="ECO:0007669"/>
    <property type="project" value="TreeGrafter"/>
</dbReference>
<dbReference type="GO" id="GO:0004151">
    <property type="term" value="F:dihydroorotase activity"/>
    <property type="evidence" value="ECO:0007669"/>
    <property type="project" value="UniProtKB-UniRule"/>
</dbReference>
<dbReference type="GO" id="GO:0008270">
    <property type="term" value="F:zinc ion binding"/>
    <property type="evidence" value="ECO:0007669"/>
    <property type="project" value="UniProtKB-UniRule"/>
</dbReference>
<dbReference type="GO" id="GO:0006207">
    <property type="term" value="P:'de novo' pyrimidine nucleobase biosynthetic process"/>
    <property type="evidence" value="ECO:0007669"/>
    <property type="project" value="TreeGrafter"/>
</dbReference>
<dbReference type="GO" id="GO:0044205">
    <property type="term" value="P:'de novo' UMP biosynthetic process"/>
    <property type="evidence" value="ECO:0007669"/>
    <property type="project" value="UniProtKB-UniRule"/>
</dbReference>
<dbReference type="CDD" id="cd01294">
    <property type="entry name" value="DHOase"/>
    <property type="match status" value="1"/>
</dbReference>
<dbReference type="FunFam" id="3.20.20.140:FF:000006">
    <property type="entry name" value="Dihydroorotase"/>
    <property type="match status" value="1"/>
</dbReference>
<dbReference type="Gene3D" id="3.20.20.140">
    <property type="entry name" value="Metal-dependent hydrolases"/>
    <property type="match status" value="1"/>
</dbReference>
<dbReference type="HAMAP" id="MF_00219">
    <property type="entry name" value="PyrC_classII"/>
    <property type="match status" value="1"/>
</dbReference>
<dbReference type="InterPro" id="IPR006680">
    <property type="entry name" value="Amidohydro-rel"/>
</dbReference>
<dbReference type="InterPro" id="IPR004721">
    <property type="entry name" value="DHOdimr"/>
</dbReference>
<dbReference type="InterPro" id="IPR002195">
    <property type="entry name" value="Dihydroorotase_CS"/>
</dbReference>
<dbReference type="InterPro" id="IPR032466">
    <property type="entry name" value="Metal_Hydrolase"/>
</dbReference>
<dbReference type="NCBIfam" id="TIGR00856">
    <property type="entry name" value="pyrC_dimer"/>
    <property type="match status" value="1"/>
</dbReference>
<dbReference type="PANTHER" id="PTHR43137">
    <property type="entry name" value="DIHYDROOROTASE"/>
    <property type="match status" value="1"/>
</dbReference>
<dbReference type="PANTHER" id="PTHR43137:SF1">
    <property type="entry name" value="DIHYDROOROTASE"/>
    <property type="match status" value="1"/>
</dbReference>
<dbReference type="Pfam" id="PF01979">
    <property type="entry name" value="Amidohydro_1"/>
    <property type="match status" value="1"/>
</dbReference>
<dbReference type="PIRSF" id="PIRSF001237">
    <property type="entry name" value="DHOdimr"/>
    <property type="match status" value="1"/>
</dbReference>
<dbReference type="SUPFAM" id="SSF51556">
    <property type="entry name" value="Metallo-dependent hydrolases"/>
    <property type="match status" value="1"/>
</dbReference>
<dbReference type="PROSITE" id="PS00482">
    <property type="entry name" value="DIHYDROOROTASE_1"/>
    <property type="match status" value="1"/>
</dbReference>
<dbReference type="PROSITE" id="PS00483">
    <property type="entry name" value="DIHYDROOROTASE_2"/>
    <property type="match status" value="1"/>
</dbReference>
<gene>
    <name evidence="1" type="primary">pyrC</name>
    <name type="ordered locus">ESA_02286</name>
</gene>
<accession>A7MG30</accession>